<gene>
    <name evidence="1" type="primary">rlmC</name>
    <name type="synonym">rumB</name>
    <name type="ordered locus">Shew185_3496</name>
</gene>
<comment type="function">
    <text evidence="1">Catalyzes the formation of 5-methyl-uridine at position 747 (m5U747) in 23S rRNA.</text>
</comment>
<comment type="catalytic activity">
    <reaction evidence="1">
        <text>uridine(747) in 23S rRNA + S-adenosyl-L-methionine = 5-methyluridine(747) in 23S rRNA + S-adenosyl-L-homocysteine + H(+)</text>
        <dbReference type="Rhea" id="RHEA:42628"/>
        <dbReference type="Rhea" id="RHEA-COMP:10154"/>
        <dbReference type="Rhea" id="RHEA-COMP:10155"/>
        <dbReference type="ChEBI" id="CHEBI:15378"/>
        <dbReference type="ChEBI" id="CHEBI:57856"/>
        <dbReference type="ChEBI" id="CHEBI:59789"/>
        <dbReference type="ChEBI" id="CHEBI:65315"/>
        <dbReference type="ChEBI" id="CHEBI:74447"/>
        <dbReference type="EC" id="2.1.1.189"/>
    </reaction>
</comment>
<comment type="similarity">
    <text evidence="1">Belongs to the class I-like SAM-binding methyltransferase superfamily. RNA M5U methyltransferase family. RlmC subfamily.</text>
</comment>
<sequence length="390" mass="43316">MSAAIVNAVKQCGYFNQGQCLSCRHIQQPLAQQVAVKTQTLQQLLAPFIPANSAELFLPPITGDDSGFRNKAKMVVLGAAHEPVLGIVSPSGEAVDLCDCLLYPGDMQALLHRLTRFVQQAGLPPYRVDKAKGELKFILLTRSQVRGEYLLRFVLRSHNGIERIERELPALLAEYPQIKVVSVNIQPIHMAILEGDEEIFLTENTRLEERFNHVPLFIRPKSFFQTNPQVAAQLYQTARDWVAEFSPRSLWDLFCGVGGFGLHCASNDITLTGIEIEAEAIACAQMSAQMMGLENVQFMALDSTDFAKGKSAADKPDLIIVNPPRRGIGEALCQSLSEFAPKAILYSSCNPKTLAKDLEHIQGYHLTKVQLFDLFPHTDHFEVLAMLVKD</sequence>
<name>RLMC_SHEB8</name>
<accession>A6WS34</accession>
<evidence type="ECO:0000255" key="1">
    <source>
        <dbReference type="HAMAP-Rule" id="MF_01012"/>
    </source>
</evidence>
<organism>
    <name type="scientific">Shewanella baltica (strain OS185)</name>
    <dbReference type="NCBI Taxonomy" id="402882"/>
    <lineage>
        <taxon>Bacteria</taxon>
        <taxon>Pseudomonadati</taxon>
        <taxon>Pseudomonadota</taxon>
        <taxon>Gammaproteobacteria</taxon>
        <taxon>Alteromonadales</taxon>
        <taxon>Shewanellaceae</taxon>
        <taxon>Shewanella</taxon>
    </lineage>
</organism>
<protein>
    <recommendedName>
        <fullName evidence="1">23S rRNA (uracil(747)-C(5))-methyltransferase RlmC</fullName>
        <ecNumber evidence="1">2.1.1.189</ecNumber>
    </recommendedName>
    <alternativeName>
        <fullName evidence="1">23S rRNA(m5U747)-methyltransferase</fullName>
    </alternativeName>
</protein>
<keyword id="KW-0004">4Fe-4S</keyword>
<keyword id="KW-0408">Iron</keyword>
<keyword id="KW-0411">Iron-sulfur</keyword>
<keyword id="KW-0479">Metal-binding</keyword>
<keyword id="KW-0489">Methyltransferase</keyword>
<keyword id="KW-0698">rRNA processing</keyword>
<keyword id="KW-0949">S-adenosyl-L-methionine</keyword>
<keyword id="KW-0808">Transferase</keyword>
<dbReference type="EC" id="2.1.1.189" evidence="1"/>
<dbReference type="EMBL" id="CP000753">
    <property type="protein sequence ID" value="ABS09623.1"/>
    <property type="molecule type" value="Genomic_DNA"/>
</dbReference>
<dbReference type="RefSeq" id="WP_012090080.1">
    <property type="nucleotide sequence ID" value="NC_009665.1"/>
</dbReference>
<dbReference type="SMR" id="A6WS34"/>
<dbReference type="KEGG" id="sbm:Shew185_3496"/>
<dbReference type="HOGENOM" id="CLU_014689_0_0_6"/>
<dbReference type="GO" id="GO:0051539">
    <property type="term" value="F:4 iron, 4 sulfur cluster binding"/>
    <property type="evidence" value="ECO:0007669"/>
    <property type="project" value="UniProtKB-KW"/>
</dbReference>
<dbReference type="GO" id="GO:0005506">
    <property type="term" value="F:iron ion binding"/>
    <property type="evidence" value="ECO:0007669"/>
    <property type="project" value="UniProtKB-UniRule"/>
</dbReference>
<dbReference type="GO" id="GO:0070041">
    <property type="term" value="F:rRNA (uridine-C5-)-methyltransferase activity"/>
    <property type="evidence" value="ECO:0007669"/>
    <property type="project" value="UniProtKB-UniRule"/>
</dbReference>
<dbReference type="GO" id="GO:0070475">
    <property type="term" value="P:rRNA base methylation"/>
    <property type="evidence" value="ECO:0007669"/>
    <property type="project" value="TreeGrafter"/>
</dbReference>
<dbReference type="CDD" id="cd02440">
    <property type="entry name" value="AdoMet_MTases"/>
    <property type="match status" value="1"/>
</dbReference>
<dbReference type="Gene3D" id="2.40.50.1070">
    <property type="match status" value="1"/>
</dbReference>
<dbReference type="Gene3D" id="3.40.50.150">
    <property type="entry name" value="Vaccinia Virus protein VP39"/>
    <property type="match status" value="1"/>
</dbReference>
<dbReference type="HAMAP" id="MF_01012">
    <property type="entry name" value="23SrRNA_methyltr_RlmC"/>
    <property type="match status" value="1"/>
</dbReference>
<dbReference type="InterPro" id="IPR011825">
    <property type="entry name" value="23SrRNA_MeTrfase_RlmC"/>
</dbReference>
<dbReference type="InterPro" id="IPR030390">
    <property type="entry name" value="MeTrfase_TrmA_AS"/>
</dbReference>
<dbReference type="InterPro" id="IPR030391">
    <property type="entry name" value="MeTrfase_TrmA_CS"/>
</dbReference>
<dbReference type="InterPro" id="IPR029063">
    <property type="entry name" value="SAM-dependent_MTases_sf"/>
</dbReference>
<dbReference type="InterPro" id="IPR010280">
    <property type="entry name" value="U5_MeTrfase_fam"/>
</dbReference>
<dbReference type="NCBIfam" id="TIGR02085">
    <property type="entry name" value="meth_trns_rumB"/>
    <property type="match status" value="1"/>
</dbReference>
<dbReference type="NCBIfam" id="TIGR00479">
    <property type="entry name" value="rumA"/>
    <property type="match status" value="1"/>
</dbReference>
<dbReference type="PANTHER" id="PTHR11061">
    <property type="entry name" value="RNA M5U METHYLTRANSFERASE"/>
    <property type="match status" value="1"/>
</dbReference>
<dbReference type="PANTHER" id="PTHR11061:SF30">
    <property type="entry name" value="TRNA (URACIL(54)-C(5))-METHYLTRANSFERASE"/>
    <property type="match status" value="1"/>
</dbReference>
<dbReference type="Pfam" id="PF05958">
    <property type="entry name" value="tRNA_U5-meth_tr"/>
    <property type="match status" value="1"/>
</dbReference>
<dbReference type="SUPFAM" id="SSF53335">
    <property type="entry name" value="S-adenosyl-L-methionine-dependent methyltransferases"/>
    <property type="match status" value="1"/>
</dbReference>
<dbReference type="PROSITE" id="PS51687">
    <property type="entry name" value="SAM_MT_RNA_M5U"/>
    <property type="match status" value="1"/>
</dbReference>
<dbReference type="PROSITE" id="PS01230">
    <property type="entry name" value="TRMA_1"/>
    <property type="match status" value="1"/>
</dbReference>
<dbReference type="PROSITE" id="PS01231">
    <property type="entry name" value="TRMA_2"/>
    <property type="match status" value="1"/>
</dbReference>
<feature type="chain" id="PRO_1000063006" description="23S rRNA (uracil(747)-C(5))-methyltransferase RlmC">
    <location>
        <begin position="1"/>
        <end position="390"/>
    </location>
</feature>
<feature type="active site" description="Nucleophile" evidence="1">
    <location>
        <position position="349"/>
    </location>
</feature>
<feature type="binding site" evidence="1">
    <location>
        <position position="12"/>
    </location>
    <ligand>
        <name>[4Fe-4S] cluster</name>
        <dbReference type="ChEBI" id="CHEBI:49883"/>
    </ligand>
</feature>
<feature type="binding site" evidence="1">
    <location>
        <position position="20"/>
    </location>
    <ligand>
        <name>[4Fe-4S] cluster</name>
        <dbReference type="ChEBI" id="CHEBI:49883"/>
    </ligand>
</feature>
<feature type="binding site" evidence="1">
    <location>
        <position position="23"/>
    </location>
    <ligand>
        <name>[4Fe-4S] cluster</name>
        <dbReference type="ChEBI" id="CHEBI:49883"/>
    </ligand>
</feature>
<feature type="binding site" evidence="1">
    <location>
        <position position="100"/>
    </location>
    <ligand>
        <name>[4Fe-4S] cluster</name>
        <dbReference type="ChEBI" id="CHEBI:49883"/>
    </ligand>
</feature>
<feature type="binding site" evidence="1">
    <location>
        <position position="225"/>
    </location>
    <ligand>
        <name>S-adenosyl-L-methionine</name>
        <dbReference type="ChEBI" id="CHEBI:59789"/>
    </ligand>
</feature>
<feature type="binding site" evidence="1">
    <location>
        <position position="254"/>
    </location>
    <ligand>
        <name>S-adenosyl-L-methionine</name>
        <dbReference type="ChEBI" id="CHEBI:59789"/>
    </ligand>
</feature>
<feature type="binding site" evidence="1">
    <location>
        <position position="275"/>
    </location>
    <ligand>
        <name>S-adenosyl-L-methionine</name>
        <dbReference type="ChEBI" id="CHEBI:59789"/>
    </ligand>
</feature>
<feature type="binding site" evidence="1">
    <location>
        <position position="322"/>
    </location>
    <ligand>
        <name>S-adenosyl-L-methionine</name>
        <dbReference type="ChEBI" id="CHEBI:59789"/>
    </ligand>
</feature>
<reference key="1">
    <citation type="submission" date="2007-07" db="EMBL/GenBank/DDBJ databases">
        <title>Complete sequence of chromosome of Shewanella baltica OS185.</title>
        <authorList>
            <consortium name="US DOE Joint Genome Institute"/>
            <person name="Copeland A."/>
            <person name="Lucas S."/>
            <person name="Lapidus A."/>
            <person name="Barry K."/>
            <person name="Glavina del Rio T."/>
            <person name="Dalin E."/>
            <person name="Tice H."/>
            <person name="Pitluck S."/>
            <person name="Sims D."/>
            <person name="Brettin T."/>
            <person name="Bruce D."/>
            <person name="Detter J.C."/>
            <person name="Han C."/>
            <person name="Schmutz J."/>
            <person name="Larimer F."/>
            <person name="Land M."/>
            <person name="Hauser L."/>
            <person name="Kyrpides N."/>
            <person name="Mikhailova N."/>
            <person name="Brettar I."/>
            <person name="Rodrigues J."/>
            <person name="Konstantinidis K."/>
            <person name="Tiedje J."/>
            <person name="Richardson P."/>
        </authorList>
    </citation>
    <scope>NUCLEOTIDE SEQUENCE [LARGE SCALE GENOMIC DNA]</scope>
    <source>
        <strain>OS185</strain>
    </source>
</reference>
<proteinExistence type="inferred from homology"/>